<comment type="function">
    <text evidence="1">Palmitoyltransferase specific for Ras proteins.</text>
</comment>
<comment type="catalytic activity">
    <reaction evidence="2">
        <text>L-cysteinyl-[protein] + hexadecanoyl-CoA = S-hexadecanoyl-L-cysteinyl-[protein] + CoA</text>
        <dbReference type="Rhea" id="RHEA:36683"/>
        <dbReference type="Rhea" id="RHEA-COMP:10131"/>
        <dbReference type="Rhea" id="RHEA-COMP:11032"/>
        <dbReference type="ChEBI" id="CHEBI:29950"/>
        <dbReference type="ChEBI" id="CHEBI:57287"/>
        <dbReference type="ChEBI" id="CHEBI:57379"/>
        <dbReference type="ChEBI" id="CHEBI:74151"/>
        <dbReference type="EC" id="2.3.1.225"/>
    </reaction>
</comment>
<comment type="subcellular location">
    <subcellularLocation>
        <location evidence="1">Endoplasmic reticulum membrane</location>
        <topology evidence="1">Multi-pass membrane protein</topology>
    </subcellularLocation>
</comment>
<comment type="domain">
    <text evidence="1">The DHHC domain is required for palmitoyltransferase activity.</text>
</comment>
<comment type="PTM">
    <text evidence="3">Autopalmitoylated.</text>
</comment>
<comment type="similarity">
    <text evidence="7">Belongs to the DHHC palmitoyltransferase family. ERF2/ZDHHC9 subfamily.</text>
</comment>
<comment type="sequence caution" evidence="7">
    <conflict type="erroneous gene model prediction">
        <sequence resource="EMBL-CDS" id="CAE76200"/>
    </conflict>
</comment>
<keyword id="KW-0012">Acyltransferase</keyword>
<keyword id="KW-0256">Endoplasmic reticulum</keyword>
<keyword id="KW-0449">Lipoprotein</keyword>
<keyword id="KW-0472">Membrane</keyword>
<keyword id="KW-0564">Palmitate</keyword>
<keyword id="KW-1185">Reference proteome</keyword>
<keyword id="KW-0808">Transferase</keyword>
<keyword id="KW-0812">Transmembrane</keyword>
<keyword id="KW-1133">Transmembrane helix</keyword>
<accession>Q7SFL7</accession>
<accession>Q6MVU6</accession>
<name>ERFB_NEUCR</name>
<gene>
    <name type="primary">ptr-2</name>
    <name type="synonym">erf2</name>
    <name type="ORF">B15B3.180</name>
    <name type="ORF">NCU02015</name>
</gene>
<dbReference type="EC" id="2.3.1.225" evidence="2"/>
<dbReference type="EMBL" id="BX842622">
    <property type="protein sequence ID" value="CAE76200.1"/>
    <property type="status" value="ALT_SEQ"/>
    <property type="molecule type" value="Genomic_DNA"/>
</dbReference>
<dbReference type="EMBL" id="CM002236">
    <property type="protein sequence ID" value="EAA35644.3"/>
    <property type="molecule type" value="Genomic_DNA"/>
</dbReference>
<dbReference type="RefSeq" id="XP_964880.3">
    <property type="nucleotide sequence ID" value="XM_959787.3"/>
</dbReference>
<dbReference type="SMR" id="Q7SFL7"/>
<dbReference type="STRING" id="367110.Q7SFL7"/>
<dbReference type="EnsemblFungi" id="EAA35644">
    <property type="protein sequence ID" value="EAA35644"/>
    <property type="gene ID" value="NCU02015"/>
</dbReference>
<dbReference type="GeneID" id="3881029"/>
<dbReference type="KEGG" id="ncr:NCU02015"/>
<dbReference type="VEuPathDB" id="FungiDB:NCU02015"/>
<dbReference type="HOGENOM" id="CLU_021757_0_0_1"/>
<dbReference type="InParanoid" id="Q7SFL7"/>
<dbReference type="OrthoDB" id="9909019at2759"/>
<dbReference type="Proteomes" id="UP000001805">
    <property type="component" value="Chromosome 1, Linkage Group I"/>
</dbReference>
<dbReference type="GO" id="GO:0005783">
    <property type="term" value="C:endoplasmic reticulum"/>
    <property type="evidence" value="ECO:0000318"/>
    <property type="project" value="GO_Central"/>
</dbReference>
<dbReference type="GO" id="GO:0005789">
    <property type="term" value="C:endoplasmic reticulum membrane"/>
    <property type="evidence" value="ECO:0007669"/>
    <property type="project" value="UniProtKB-SubCell"/>
</dbReference>
<dbReference type="GO" id="GO:0005794">
    <property type="term" value="C:Golgi apparatus"/>
    <property type="evidence" value="ECO:0000318"/>
    <property type="project" value="GO_Central"/>
</dbReference>
<dbReference type="GO" id="GO:0019706">
    <property type="term" value="F:protein-cysteine S-palmitoyltransferase activity"/>
    <property type="evidence" value="ECO:0000318"/>
    <property type="project" value="GO_Central"/>
</dbReference>
<dbReference type="GO" id="GO:0006612">
    <property type="term" value="P:protein targeting to membrane"/>
    <property type="evidence" value="ECO:0000318"/>
    <property type="project" value="GO_Central"/>
</dbReference>
<dbReference type="InterPro" id="IPR001594">
    <property type="entry name" value="Palmitoyltrfase_DHHC"/>
</dbReference>
<dbReference type="InterPro" id="IPR039859">
    <property type="entry name" value="PFA4/ZDH16/20/ERF2-like"/>
</dbReference>
<dbReference type="PANTHER" id="PTHR22883:SF43">
    <property type="entry name" value="PALMITOYLTRANSFERASE APP"/>
    <property type="match status" value="1"/>
</dbReference>
<dbReference type="PANTHER" id="PTHR22883">
    <property type="entry name" value="ZINC FINGER DHHC DOMAIN CONTAINING PROTEIN"/>
    <property type="match status" value="1"/>
</dbReference>
<dbReference type="Pfam" id="PF01529">
    <property type="entry name" value="DHHC"/>
    <property type="match status" value="1"/>
</dbReference>
<dbReference type="PROSITE" id="PS50216">
    <property type="entry name" value="DHHC"/>
    <property type="match status" value="1"/>
</dbReference>
<sequence length="680" mass="75414">MASEEGPSRSASPTNVDNTFPQYPPRAELTVAGPPSLISSRMTDIGTEDGQGSDTTPRGGGPSSANPNRRSGFYSDTQSRPETSGTGLSSRGPWAQSVPLRQQLTGKRGSIAGSIGSAGGRPISAASRSHVPSLTSHGFFRPMSSQKLQAQRGAGRPPTMNRPYVITGEAGARNSVISTGSGRIGAQIAEDAELRMPSRGTEMTEQETMERMTANTSPINGFFPTSSVTDSVRPLQSPVDARNINVEMNKDYREESPTTPPRSPTRTSRSFRSSFLMPRMNESGITGSNREIEGGEKLQSAASSPNIPPQSYERQRARFKRRAKRQNRANLGKNYEYFEGNTVFCLGGRFQNTKQRPINIATGSLIVLPCILFFIFSAPWIWHNISPAIPVTFAYLAYICVSSFLHASASDPGILPRNLHKFPPPEMEDSPTGPPTTDWVLVHSAEASTAAMEVPIKYCKTCQLWRPPRAHHCRLCDNCVETQDHHCVWLNNCVGRRNYRYFFTFVSSATVLALYLIGACLAQILVYKNQHHISFGHAVNHFRVPFAMVFFGFLTFLYPAALTGYHIFLMARGETTREYLNSHKFPKSDRYRAFTQANWLKNWFVVLCRPRPPTYYGFKVKYNQGDQRLGSHRRWQQPAVSDSKEGMEMQNVSPQLPQTGFMGPTALRNSNNGSTAEVRA</sequence>
<feature type="chain" id="PRO_0000212945" description="Palmitoyltransferase erf2">
    <location>
        <begin position="1"/>
        <end position="680"/>
    </location>
</feature>
<feature type="topological domain" description="Cytoplasmic" evidence="4">
    <location>
        <begin position="1"/>
        <end position="361"/>
    </location>
</feature>
<feature type="transmembrane region" description="Helical" evidence="4">
    <location>
        <begin position="362"/>
        <end position="382"/>
    </location>
</feature>
<feature type="topological domain" description="Lumenal" evidence="4">
    <location>
        <begin position="383"/>
        <end position="384"/>
    </location>
</feature>
<feature type="transmembrane region" description="Helical" evidence="4">
    <location>
        <begin position="385"/>
        <end position="405"/>
    </location>
</feature>
<feature type="topological domain" description="Cytoplasmic" evidence="4">
    <location>
        <begin position="406"/>
        <end position="501"/>
    </location>
</feature>
<feature type="transmembrane region" description="Helical" evidence="4">
    <location>
        <begin position="502"/>
        <end position="522"/>
    </location>
</feature>
<feature type="topological domain" description="Lumenal" evidence="4">
    <location>
        <begin position="523"/>
        <end position="543"/>
    </location>
</feature>
<feature type="transmembrane region" description="Helical" evidence="4">
    <location>
        <begin position="544"/>
        <end position="564"/>
    </location>
</feature>
<feature type="topological domain" description="Cytoplasmic" evidence="4">
    <location>
        <begin position="565"/>
        <end position="680"/>
    </location>
</feature>
<feature type="domain" description="DHHC" evidence="5">
    <location>
        <begin position="457"/>
        <end position="507"/>
    </location>
</feature>
<feature type="region of interest" description="Disordered" evidence="6">
    <location>
        <begin position="1"/>
        <end position="128"/>
    </location>
</feature>
<feature type="region of interest" description="Disordered" evidence="6">
    <location>
        <begin position="246"/>
        <end position="315"/>
    </location>
</feature>
<feature type="region of interest" description="Disordered" evidence="6">
    <location>
        <begin position="656"/>
        <end position="680"/>
    </location>
</feature>
<feature type="compositionally biased region" description="Polar residues" evidence="6">
    <location>
        <begin position="9"/>
        <end position="21"/>
    </location>
</feature>
<feature type="compositionally biased region" description="Polar residues" evidence="6">
    <location>
        <begin position="63"/>
        <end position="89"/>
    </location>
</feature>
<feature type="compositionally biased region" description="Low complexity" evidence="6">
    <location>
        <begin position="106"/>
        <end position="128"/>
    </location>
</feature>
<feature type="compositionally biased region" description="Low complexity" evidence="6">
    <location>
        <begin position="264"/>
        <end position="275"/>
    </location>
</feature>
<feature type="compositionally biased region" description="Polar residues" evidence="6">
    <location>
        <begin position="667"/>
        <end position="680"/>
    </location>
</feature>
<feature type="active site" description="S-palmitoyl cysteine intermediate" evidence="2">
    <location>
        <position position="487"/>
    </location>
</feature>
<feature type="sequence conflict" description="In Ref. 1." evidence="7" ref="1">
    <original>G</original>
    <variation>GVCYSLLPF</variation>
    <location>
        <position position="413"/>
    </location>
</feature>
<reference key="1">
    <citation type="journal article" date="2003" name="Nucleic Acids Res.">
        <title>What's in the genome of a filamentous fungus? Analysis of the Neurospora genome sequence.</title>
        <authorList>
            <person name="Mannhaupt G."/>
            <person name="Montrone C."/>
            <person name="Haase D."/>
            <person name="Mewes H.-W."/>
            <person name="Aign V."/>
            <person name="Hoheisel J.D."/>
            <person name="Fartmann B."/>
            <person name="Nyakatura G."/>
            <person name="Kempken F."/>
            <person name="Maier J."/>
            <person name="Schulte U."/>
        </authorList>
    </citation>
    <scope>NUCLEOTIDE SEQUENCE [LARGE SCALE GENOMIC DNA]</scope>
    <source>
        <strain>ATCC 24698 / 74-OR23-1A / CBS 708.71 / DSM 1257 / FGSC 987</strain>
    </source>
</reference>
<reference key="2">
    <citation type="journal article" date="2003" name="Nature">
        <title>The genome sequence of the filamentous fungus Neurospora crassa.</title>
        <authorList>
            <person name="Galagan J.E."/>
            <person name="Calvo S.E."/>
            <person name="Borkovich K.A."/>
            <person name="Selker E.U."/>
            <person name="Read N.D."/>
            <person name="Jaffe D.B."/>
            <person name="FitzHugh W."/>
            <person name="Ma L.-J."/>
            <person name="Smirnov S."/>
            <person name="Purcell S."/>
            <person name="Rehman B."/>
            <person name="Elkins T."/>
            <person name="Engels R."/>
            <person name="Wang S."/>
            <person name="Nielsen C.B."/>
            <person name="Butler J."/>
            <person name="Endrizzi M."/>
            <person name="Qui D."/>
            <person name="Ianakiev P."/>
            <person name="Bell-Pedersen D."/>
            <person name="Nelson M.A."/>
            <person name="Werner-Washburne M."/>
            <person name="Selitrennikoff C.P."/>
            <person name="Kinsey J.A."/>
            <person name="Braun E.L."/>
            <person name="Zelter A."/>
            <person name="Schulte U."/>
            <person name="Kothe G.O."/>
            <person name="Jedd G."/>
            <person name="Mewes H.-W."/>
            <person name="Staben C."/>
            <person name="Marcotte E."/>
            <person name="Greenberg D."/>
            <person name="Roy A."/>
            <person name="Foley K."/>
            <person name="Naylor J."/>
            <person name="Stange-Thomann N."/>
            <person name="Barrett R."/>
            <person name="Gnerre S."/>
            <person name="Kamal M."/>
            <person name="Kamvysselis M."/>
            <person name="Mauceli E.W."/>
            <person name="Bielke C."/>
            <person name="Rudd S."/>
            <person name="Frishman D."/>
            <person name="Krystofova S."/>
            <person name="Rasmussen C."/>
            <person name="Metzenberg R.L."/>
            <person name="Perkins D.D."/>
            <person name="Kroken S."/>
            <person name="Cogoni C."/>
            <person name="Macino G."/>
            <person name="Catcheside D.E.A."/>
            <person name="Li W."/>
            <person name="Pratt R.J."/>
            <person name="Osmani S.A."/>
            <person name="DeSouza C.P.C."/>
            <person name="Glass N.L."/>
            <person name="Orbach M.J."/>
            <person name="Berglund J.A."/>
            <person name="Voelker R."/>
            <person name="Yarden O."/>
            <person name="Plamann M."/>
            <person name="Seiler S."/>
            <person name="Dunlap J.C."/>
            <person name="Radford A."/>
            <person name="Aramayo R."/>
            <person name="Natvig D.O."/>
            <person name="Alex L.A."/>
            <person name="Mannhaupt G."/>
            <person name="Ebbole D.J."/>
            <person name="Freitag M."/>
            <person name="Paulsen I."/>
            <person name="Sachs M.S."/>
            <person name="Lander E.S."/>
            <person name="Nusbaum C."/>
            <person name="Birren B.W."/>
        </authorList>
    </citation>
    <scope>NUCLEOTIDE SEQUENCE [LARGE SCALE GENOMIC DNA]</scope>
    <source>
        <strain>ATCC 24698 / 74-OR23-1A / CBS 708.71 / DSM 1257 / FGSC 987</strain>
    </source>
</reference>
<protein>
    <recommendedName>
        <fullName>Palmitoyltransferase erf2</fullName>
        <ecNumber evidence="2">2.3.1.225</ecNumber>
    </recommendedName>
    <alternativeName>
        <fullName>DHHC cysteine-rich domain-containing protein erf2</fullName>
    </alternativeName>
    <alternativeName>
        <fullName>Palmitoyltransferase 2</fullName>
    </alternativeName>
    <alternativeName>
        <fullName>Ras protein acyltransferase</fullName>
    </alternativeName>
</protein>
<proteinExistence type="inferred from homology"/>
<evidence type="ECO:0000250" key="1">
    <source>
        <dbReference type="UniProtKB" id="Q06551"/>
    </source>
</evidence>
<evidence type="ECO:0000250" key="2">
    <source>
        <dbReference type="UniProtKB" id="Q8VDZ4"/>
    </source>
</evidence>
<evidence type="ECO:0000250" key="3">
    <source>
        <dbReference type="UniProtKB" id="Q9UIJ5"/>
    </source>
</evidence>
<evidence type="ECO:0000255" key="4"/>
<evidence type="ECO:0000255" key="5">
    <source>
        <dbReference type="PROSITE-ProRule" id="PRU00067"/>
    </source>
</evidence>
<evidence type="ECO:0000256" key="6">
    <source>
        <dbReference type="SAM" id="MobiDB-lite"/>
    </source>
</evidence>
<evidence type="ECO:0000305" key="7"/>
<organism>
    <name type="scientific">Neurospora crassa (strain ATCC 24698 / 74-OR23-1A / CBS 708.71 / DSM 1257 / FGSC 987)</name>
    <dbReference type="NCBI Taxonomy" id="367110"/>
    <lineage>
        <taxon>Eukaryota</taxon>
        <taxon>Fungi</taxon>
        <taxon>Dikarya</taxon>
        <taxon>Ascomycota</taxon>
        <taxon>Pezizomycotina</taxon>
        <taxon>Sordariomycetes</taxon>
        <taxon>Sordariomycetidae</taxon>
        <taxon>Sordariales</taxon>
        <taxon>Sordariaceae</taxon>
        <taxon>Neurospora</taxon>
    </lineage>
</organism>